<dbReference type="EC" id="4.1.1.48" evidence="1"/>
<dbReference type="EMBL" id="CP000304">
    <property type="protein sequence ID" value="ABP78452.1"/>
    <property type="molecule type" value="Genomic_DNA"/>
</dbReference>
<dbReference type="RefSeq" id="WP_011911959.1">
    <property type="nucleotide sequence ID" value="NC_009434.1"/>
</dbReference>
<dbReference type="SMR" id="A4VHK1"/>
<dbReference type="KEGG" id="psa:PST_0747"/>
<dbReference type="eggNOG" id="COG0134">
    <property type="taxonomic scope" value="Bacteria"/>
</dbReference>
<dbReference type="HOGENOM" id="CLU_034247_2_0_6"/>
<dbReference type="UniPathway" id="UPA00035">
    <property type="reaction ID" value="UER00043"/>
</dbReference>
<dbReference type="Proteomes" id="UP000000233">
    <property type="component" value="Chromosome"/>
</dbReference>
<dbReference type="GO" id="GO:0004425">
    <property type="term" value="F:indole-3-glycerol-phosphate synthase activity"/>
    <property type="evidence" value="ECO:0007669"/>
    <property type="project" value="UniProtKB-UniRule"/>
</dbReference>
<dbReference type="GO" id="GO:0004640">
    <property type="term" value="F:phosphoribosylanthranilate isomerase activity"/>
    <property type="evidence" value="ECO:0007669"/>
    <property type="project" value="TreeGrafter"/>
</dbReference>
<dbReference type="GO" id="GO:0000162">
    <property type="term" value="P:L-tryptophan biosynthetic process"/>
    <property type="evidence" value="ECO:0007669"/>
    <property type="project" value="UniProtKB-UniRule"/>
</dbReference>
<dbReference type="CDD" id="cd00331">
    <property type="entry name" value="IGPS"/>
    <property type="match status" value="1"/>
</dbReference>
<dbReference type="FunFam" id="3.20.20.70:FF:000024">
    <property type="entry name" value="Indole-3-glycerol phosphate synthase"/>
    <property type="match status" value="1"/>
</dbReference>
<dbReference type="Gene3D" id="3.20.20.70">
    <property type="entry name" value="Aldolase class I"/>
    <property type="match status" value="1"/>
</dbReference>
<dbReference type="HAMAP" id="MF_00134_B">
    <property type="entry name" value="IGPS_B"/>
    <property type="match status" value="1"/>
</dbReference>
<dbReference type="InterPro" id="IPR013785">
    <property type="entry name" value="Aldolase_TIM"/>
</dbReference>
<dbReference type="InterPro" id="IPR045186">
    <property type="entry name" value="Indole-3-glycerol_P_synth"/>
</dbReference>
<dbReference type="InterPro" id="IPR013798">
    <property type="entry name" value="Indole-3-glycerol_P_synth_dom"/>
</dbReference>
<dbReference type="InterPro" id="IPR001468">
    <property type="entry name" value="Indole-3-GlycerolPSynthase_CS"/>
</dbReference>
<dbReference type="InterPro" id="IPR011060">
    <property type="entry name" value="RibuloseP-bd_barrel"/>
</dbReference>
<dbReference type="NCBIfam" id="NF001370">
    <property type="entry name" value="PRK00278.1-2"/>
    <property type="match status" value="1"/>
</dbReference>
<dbReference type="NCBIfam" id="NF001373">
    <property type="entry name" value="PRK00278.1-6"/>
    <property type="match status" value="1"/>
</dbReference>
<dbReference type="NCBIfam" id="NF001377">
    <property type="entry name" value="PRK00278.2-4"/>
    <property type="match status" value="1"/>
</dbReference>
<dbReference type="PANTHER" id="PTHR22854:SF2">
    <property type="entry name" value="INDOLE-3-GLYCEROL-PHOSPHATE SYNTHASE"/>
    <property type="match status" value="1"/>
</dbReference>
<dbReference type="PANTHER" id="PTHR22854">
    <property type="entry name" value="TRYPTOPHAN BIOSYNTHESIS PROTEIN"/>
    <property type="match status" value="1"/>
</dbReference>
<dbReference type="Pfam" id="PF00218">
    <property type="entry name" value="IGPS"/>
    <property type="match status" value="1"/>
</dbReference>
<dbReference type="SUPFAM" id="SSF51366">
    <property type="entry name" value="Ribulose-phoshate binding barrel"/>
    <property type="match status" value="1"/>
</dbReference>
<dbReference type="PROSITE" id="PS00614">
    <property type="entry name" value="IGPS"/>
    <property type="match status" value="1"/>
</dbReference>
<reference key="1">
    <citation type="journal article" date="2008" name="Proc. Natl. Acad. Sci. U.S.A.">
        <title>Nitrogen fixation island and rhizosphere competence traits in the genome of root-associated Pseudomonas stutzeri A1501.</title>
        <authorList>
            <person name="Yan Y."/>
            <person name="Yang J."/>
            <person name="Dou Y."/>
            <person name="Chen M."/>
            <person name="Ping S."/>
            <person name="Peng J."/>
            <person name="Lu W."/>
            <person name="Zhang W."/>
            <person name="Yao Z."/>
            <person name="Li H."/>
            <person name="Liu W."/>
            <person name="He S."/>
            <person name="Geng L."/>
            <person name="Zhang X."/>
            <person name="Yang F."/>
            <person name="Yu H."/>
            <person name="Zhan Y."/>
            <person name="Li D."/>
            <person name="Lin Z."/>
            <person name="Wang Y."/>
            <person name="Elmerich C."/>
            <person name="Lin M."/>
            <person name="Jin Q."/>
        </authorList>
    </citation>
    <scope>NUCLEOTIDE SEQUENCE [LARGE SCALE GENOMIC DNA]</scope>
    <source>
        <strain>A1501</strain>
    </source>
</reference>
<feature type="chain" id="PRO_1000018537" description="Indole-3-glycerol phosphate synthase">
    <location>
        <begin position="1"/>
        <end position="278"/>
    </location>
</feature>
<proteinExistence type="inferred from homology"/>
<comment type="catalytic activity">
    <reaction evidence="1">
        <text>1-(2-carboxyphenylamino)-1-deoxy-D-ribulose 5-phosphate + H(+) = (1S,2R)-1-C-(indol-3-yl)glycerol 3-phosphate + CO2 + H2O</text>
        <dbReference type="Rhea" id="RHEA:23476"/>
        <dbReference type="ChEBI" id="CHEBI:15377"/>
        <dbReference type="ChEBI" id="CHEBI:15378"/>
        <dbReference type="ChEBI" id="CHEBI:16526"/>
        <dbReference type="ChEBI" id="CHEBI:58613"/>
        <dbReference type="ChEBI" id="CHEBI:58866"/>
        <dbReference type="EC" id="4.1.1.48"/>
    </reaction>
</comment>
<comment type="pathway">
    <text evidence="1">Amino-acid biosynthesis; L-tryptophan biosynthesis; L-tryptophan from chorismate: step 4/5.</text>
</comment>
<comment type="similarity">
    <text evidence="1">Belongs to the TrpC family.</text>
</comment>
<keyword id="KW-0028">Amino-acid biosynthesis</keyword>
<keyword id="KW-0057">Aromatic amino acid biosynthesis</keyword>
<keyword id="KW-0210">Decarboxylase</keyword>
<keyword id="KW-0456">Lyase</keyword>
<keyword id="KW-1185">Reference proteome</keyword>
<keyword id="KW-0822">Tryptophan biosynthesis</keyword>
<evidence type="ECO:0000255" key="1">
    <source>
        <dbReference type="HAMAP-Rule" id="MF_00134"/>
    </source>
</evidence>
<accession>A4VHK1</accession>
<name>TRPC_STUS1</name>
<organism>
    <name type="scientific">Stutzerimonas stutzeri (strain A1501)</name>
    <name type="common">Pseudomonas stutzeri</name>
    <dbReference type="NCBI Taxonomy" id="379731"/>
    <lineage>
        <taxon>Bacteria</taxon>
        <taxon>Pseudomonadati</taxon>
        <taxon>Pseudomonadota</taxon>
        <taxon>Gammaproteobacteria</taxon>
        <taxon>Pseudomonadales</taxon>
        <taxon>Pseudomonadaceae</taxon>
        <taxon>Stutzerimonas</taxon>
    </lineage>
</organism>
<gene>
    <name evidence="1" type="primary">trpC</name>
    <name type="ordered locus">PST_0747</name>
</gene>
<sequence length="278" mass="30370">MSVPTVLEKIIARKLEEVAERSRRIGLAELEQQAAIADPVRGFAAALEQRVNAKEPAVIAEVKKASPSKGVIRDPFLPAEIAAGYEAGGAACLSVLTDIDFFQGADAYLQQARAACSLPVIRKDFMIDPYQVVEARALGADCILLIVAALDDARMHELAAVAKAHGLDVLVEVHDGDELERALRLETPLVGINNRNLHTFEVSLETTLDLLPRVPKDRLVITESGILNRADVELMEINQVYAFLVGEAFMRAEQPGVELQRLFFPDRARSRGVVADPE</sequence>
<protein>
    <recommendedName>
        <fullName evidence="1">Indole-3-glycerol phosphate synthase</fullName>
        <shortName evidence="1">IGPS</shortName>
        <ecNumber evidence="1">4.1.1.48</ecNumber>
    </recommendedName>
</protein>